<keyword id="KW-0489">Methyltransferase</keyword>
<keyword id="KW-0949">S-adenosyl-L-methionine</keyword>
<keyword id="KW-0808">Transferase</keyword>
<reference key="1">
    <citation type="journal article" date="2012" name="Plant Physiol.">
        <title>A set of regioselective O-methyltransferases gives rise to the complex pattern of methoxylated flavones in sweet basil.</title>
        <authorList>
            <person name="Berim A."/>
            <person name="Hyatt D.C."/>
            <person name="Gang D.R."/>
        </authorList>
    </citation>
    <scope>NUCLEOTIDE SEQUENCE [MRNA]</scope>
    <scope>FUNCTION</scope>
    <scope>MUTAGENESIS OF SER-109; ALA-111; GLY-181; ILE-292; VAL-296 AND MET-297</scope>
    <scope>CATALYTIC ACTIVITY</scope>
    <scope>BIOPHYSICOCHEMICAL PROPERTIES</scope>
    <scope>TISSUE SPECIFICITY</scope>
    <scope>DEVELOPMENTAL STAGE</scope>
    <scope>ACTIVITY REGULATION</scope>
    <source>
        <strain>cv. EMX-1</strain>
        <strain>cv. SD</strain>
        <tissue>Peltate glandular trichome</tissue>
    </source>
</reference>
<reference key="2">
    <citation type="journal article" date="2018" name="Int. J. Biol. Macromol.">
        <title>Nevadensin is a naturally occurring selective inhibitor of human carboxylesterase 1.</title>
        <authorList>
            <person name="Wang Y.-Q."/>
            <person name="Weng Z.-M."/>
            <person name="Dou T.-Y."/>
            <person name="Hou J."/>
            <person name="Wang D.-D."/>
            <person name="Ding L.-L."/>
            <person name="Zou L.-W."/>
            <person name="Yu Y."/>
            <person name="Chen J."/>
            <person name="Tang H."/>
            <person name="Ge G.-B."/>
        </authorList>
    </citation>
    <scope>BIOTECHNOLOGY</scope>
</reference>
<reference key="3">
    <citation type="journal article" date="2019" name="Nat. Prod. Rep.">
        <title>Non-volatile natural products in plant glandular trichomes: chemistry, biological activities and biosynthesis.</title>
        <authorList>
            <person name="Liu Y."/>
            <person name="Jing S.-X."/>
            <person name="Luo S.-H."/>
            <person name="Li S.-H."/>
        </authorList>
    </citation>
    <scope>PATHWAY</scope>
    <scope>REVIEW</scope>
</reference>
<gene>
    <name evidence="5" type="primary">FOMT3</name>
</gene>
<sequence>MAVDKEVQLHAQAWEHALSYINSTALSAAVELEIPDILEDHGGLMSLSELSAASGCPREPLYRLMRFLIFHGIFTKSDDCYAQSPLSRLFTRENLGPYMLMQATPVTRSPAGLSGEALKTGTSLYLKSIRGEDSWSDPAYGYHMKAFTNAMIAHARLTAAAIVSNYPAAFDGLRSVVDVGGRHGTAIGRLVEAFPWVRGIAFDLPEIVADAPPRKGVDFVGGDMFESVPKADAVMLMWILHDWSDDKCIEILKKCKEAIPASTGKVMIVDAIINEDGEGDEFSGARLSLDMIMLAVMAQGKERTYKEWVHLLNEAGFSKHTVKNIKSIESVIEAYP</sequence>
<name>FOMT3_OCIBA</name>
<accession>K0I7Q2</accession>
<evidence type="ECO:0000250" key="1">
    <source>
        <dbReference type="UniProtKB" id="Q7XB10"/>
    </source>
</evidence>
<evidence type="ECO:0000255" key="2">
    <source>
        <dbReference type="PROSITE-ProRule" id="PRU01020"/>
    </source>
</evidence>
<evidence type="ECO:0000269" key="3">
    <source>
    </source>
</evidence>
<evidence type="ECO:0000269" key="4">
    <source>
    </source>
</evidence>
<evidence type="ECO:0000303" key="5">
    <source>
    </source>
</evidence>
<evidence type="ECO:0000303" key="6">
    <source>
    </source>
</evidence>
<evidence type="ECO:0000305" key="7">
    <source>
    </source>
</evidence>
<proteinExistence type="evidence at protein level"/>
<dbReference type="EC" id="2.1.1.-" evidence="2 3"/>
<dbReference type="EMBL" id="JQ653277">
    <property type="protein sequence ID" value="AFU50297.1"/>
    <property type="molecule type" value="mRNA"/>
</dbReference>
<dbReference type="SMR" id="K0I7Q2"/>
<dbReference type="BioCyc" id="MetaCyc:MONOMER-18658"/>
<dbReference type="BRENDA" id="2.1.1.75">
    <property type="organism ID" value="4385"/>
</dbReference>
<dbReference type="GO" id="GO:0008171">
    <property type="term" value="F:O-methyltransferase activity"/>
    <property type="evidence" value="ECO:0007669"/>
    <property type="project" value="InterPro"/>
</dbReference>
<dbReference type="GO" id="GO:0046983">
    <property type="term" value="F:protein dimerization activity"/>
    <property type="evidence" value="ECO:0007669"/>
    <property type="project" value="InterPro"/>
</dbReference>
<dbReference type="GO" id="GO:0032259">
    <property type="term" value="P:methylation"/>
    <property type="evidence" value="ECO:0007669"/>
    <property type="project" value="UniProtKB-KW"/>
</dbReference>
<dbReference type="Gene3D" id="3.40.50.150">
    <property type="entry name" value="Vaccinia Virus protein VP39"/>
    <property type="match status" value="1"/>
</dbReference>
<dbReference type="Gene3D" id="1.10.10.10">
    <property type="entry name" value="Winged helix-like DNA-binding domain superfamily/Winged helix DNA-binding domain"/>
    <property type="match status" value="1"/>
</dbReference>
<dbReference type="InterPro" id="IPR016461">
    <property type="entry name" value="COMT-like"/>
</dbReference>
<dbReference type="InterPro" id="IPR001077">
    <property type="entry name" value="O_MeTrfase_dom"/>
</dbReference>
<dbReference type="InterPro" id="IPR012967">
    <property type="entry name" value="Plant_O-MeTrfase_dimerisation"/>
</dbReference>
<dbReference type="InterPro" id="IPR029063">
    <property type="entry name" value="SAM-dependent_MTases_sf"/>
</dbReference>
<dbReference type="InterPro" id="IPR036388">
    <property type="entry name" value="WH-like_DNA-bd_sf"/>
</dbReference>
<dbReference type="InterPro" id="IPR036390">
    <property type="entry name" value="WH_DNA-bd_sf"/>
</dbReference>
<dbReference type="PANTHER" id="PTHR11746">
    <property type="entry name" value="O-METHYLTRANSFERASE"/>
    <property type="match status" value="1"/>
</dbReference>
<dbReference type="Pfam" id="PF08100">
    <property type="entry name" value="Dimerisation"/>
    <property type="match status" value="1"/>
</dbReference>
<dbReference type="Pfam" id="PF00891">
    <property type="entry name" value="Methyltransf_2"/>
    <property type="match status" value="1"/>
</dbReference>
<dbReference type="PIRSF" id="PIRSF005739">
    <property type="entry name" value="O-mtase"/>
    <property type="match status" value="1"/>
</dbReference>
<dbReference type="SUPFAM" id="SSF53335">
    <property type="entry name" value="S-adenosyl-L-methionine-dependent methyltransferases"/>
    <property type="match status" value="1"/>
</dbReference>
<dbReference type="SUPFAM" id="SSF46785">
    <property type="entry name" value="Winged helix' DNA-binding domain"/>
    <property type="match status" value="1"/>
</dbReference>
<dbReference type="PROSITE" id="PS51683">
    <property type="entry name" value="SAM_OMT_II"/>
    <property type="match status" value="1"/>
</dbReference>
<feature type="chain" id="PRO_0000456916" description="Flavonoid 4'-O-methyltransferase 3">
    <location>
        <begin position="1"/>
        <end position="336"/>
    </location>
</feature>
<feature type="active site" description="Proton acceptor" evidence="2">
    <location>
        <position position="241"/>
    </location>
</feature>
<feature type="binding site" evidence="2">
    <location>
        <position position="140"/>
    </location>
    <ligand>
        <name>S-adenosyl-L-methionine</name>
        <dbReference type="ChEBI" id="CHEBI:59789"/>
    </ligand>
</feature>
<feature type="binding site" evidence="2">
    <location>
        <position position="203"/>
    </location>
    <ligand>
        <name>S-adenosyl-L-methionine</name>
        <dbReference type="ChEBI" id="CHEBI:59789"/>
    </ligand>
</feature>
<feature type="mutagenesis site" description="Increased ability to produce scutellarein-4'-methyl ether (SCU4'Me) from scutellarein (SCU); when associated with T-111. Reduced ability to use cirsimaritin (CIRM) as substrate but unchanged efficiency toward scutellarein-7-methyl ether (SCU7Me) and increased ability to produce SCU4'Me from SCU; when associated with T-111 and S-181." evidence="3">
    <original>S</original>
    <variation>C</variation>
    <location>
        <position position="109"/>
    </location>
</feature>
<feature type="mutagenesis site" description="Increased ability to produce scutellarein-4'-methyl ether (SCU4'Me) from scutellarein (SCU); when associated with C-109. Reduced ability to use cirsimaritin (CIRM) as substrate but unchanged efficiency toward scutellarein-7-methyl ether (SCU7Me) and increased ability to produce SCU4'Me from SCU; when associated with C-109 and S-181." evidence="3">
    <original>A</original>
    <variation>T</variation>
    <location>
        <position position="111"/>
    </location>
</feature>
<feature type="mutagenesis site" description="Reduced ability to use cirsimaritin (CIRM) as substrate but unchanged efficiency toward scutellarein-7-methyl ether (SCU7Me); when associated with C-109 and T-111." evidence="3">
    <original>G</original>
    <variation>S</variation>
    <location>
        <position position="181"/>
    </location>
</feature>
<feature type="mutagenesis site" description="Reduced ability to use scutellarein-7-methyl ether (SCU7Me) as substrate but slightly increased efficiency toward cirsimaritin (CIRM). Lower methylation rate toward both CIRM and SCU7Me; when associated with M-296. Almost exclusive CIRM production and lost ability to produce ladanein (LAD) from scutellarein-7-methyl ether (SCU7Me); when associated with M-296 and T-297." evidence="3">
    <original>I</original>
    <variation>T</variation>
    <variation>V</variation>
    <location>
        <position position="292"/>
    </location>
</feature>
<feature type="mutagenesis site" description="Lower methylation rate toward both CIRM and SCU7Me; when associated with T-292. Almost exclusive CIRM production and lost ability to produce ladanein (LAD) from scutellarein-7-methyl ether (SCU7Me); when associated with T-292 and T-297." evidence="3">
    <original>V</original>
    <variation>M</variation>
    <location>
        <position position="296"/>
    </location>
</feature>
<feature type="mutagenesis site" description="Almost exclusive cirsimaritin (CIRM) production and lost ability to produce ladanein (LAD) from scutellarein-7-methyl ether (SCU7Me); when associated with T-292 and M-296." evidence="3">
    <original>M</original>
    <variation>T</variation>
    <location>
        <position position="297"/>
    </location>
</feature>
<organism>
    <name type="scientific">Ocimum basilicum</name>
    <name type="common">Sweet basil</name>
    <dbReference type="NCBI Taxonomy" id="39350"/>
    <lineage>
        <taxon>Eukaryota</taxon>
        <taxon>Viridiplantae</taxon>
        <taxon>Streptophyta</taxon>
        <taxon>Embryophyta</taxon>
        <taxon>Tracheophyta</taxon>
        <taxon>Spermatophyta</taxon>
        <taxon>Magnoliopsida</taxon>
        <taxon>eudicotyledons</taxon>
        <taxon>Gunneridae</taxon>
        <taxon>Pentapetalae</taxon>
        <taxon>asterids</taxon>
        <taxon>lamiids</taxon>
        <taxon>Lamiales</taxon>
        <taxon>Lamiaceae</taxon>
        <taxon>Nepetoideae</taxon>
        <taxon>Ocimeae</taxon>
        <taxon>Ociminae</taxon>
        <taxon>Ocimum</taxon>
    </lineage>
</organism>
<protein>
    <recommendedName>
        <fullName evidence="5">Flavonoid 4'-O-methyltransferase 3</fullName>
        <shortName evidence="5">ObFOMT3</shortName>
        <ecNumber evidence="2 3">2.1.1.-</ecNumber>
    </recommendedName>
    <alternativeName>
        <fullName evidence="7">Cirsiliol 4'-O-methyltransferase</fullName>
        <ecNumber evidence="3">2.1.1.-</ecNumber>
    </alternativeName>
    <alternativeName>
        <fullName evidence="7">Cirsimaritin 4'-O-methyltransferase</fullName>
        <ecNumber evidence="3">2.1.1.-</ecNumber>
    </alternativeName>
    <alternativeName>
        <fullName evidence="7">Genkwanin 4'-O-methyltransferase</fullName>
        <ecNumber evidence="3">2.1.1.-</ecNumber>
    </alternativeName>
    <alternativeName>
        <fullName evidence="7">Scutellarein-7-methyl ether 4'-O-methyltransferase</fullName>
        <ecNumber evidence="3">2.1.1.-</ecNumber>
    </alternativeName>
</protein>
<comment type="function">
    <text evidence="3">Flavonoid 4'-O-methyltransferase involved in the biosynthesis of polymethoxylated flavonoids natural products such as nevadensin and salvigenin, aroma compounds which contribute to the flavor of sweet basil, and exhibit pharmacological activities such as anti-allergic, anti-oxidant, antibacterial, anti-proliferative, and anti-inflammatory effects (PubMed:22923679). Catalyzes S-adenosylmethionine-dependent regioselective 4'-O-methylation of flavonoids; active on various hydroxylated flavonoid substrates, including scutellarein-7-methyl ether (SCU7Me) and cirsimaritin (CIRM), and, with a lower efficiency, hispidulin, ladanein (LAD), cirsioliol (CIRL) and genkwanin (GENK) (PubMed:22923679).</text>
</comment>
<comment type="catalytic activity">
    <reaction evidence="3">
        <text>scutellarein 7-methyl ether + S-adenosyl-L-methionine = ladanein + S-adenosyl-L-homocysteine + H(+)</text>
        <dbReference type="Rhea" id="RHEA:73239"/>
        <dbReference type="ChEBI" id="CHEBI:15378"/>
        <dbReference type="ChEBI" id="CHEBI:57856"/>
        <dbReference type="ChEBI" id="CHEBI:59789"/>
        <dbReference type="ChEBI" id="CHEBI:192701"/>
        <dbReference type="ChEBI" id="CHEBI:192702"/>
    </reaction>
    <physiologicalReaction direction="left-to-right" evidence="7">
        <dbReference type="Rhea" id="RHEA:73240"/>
    </physiologicalReaction>
</comment>
<comment type="catalytic activity">
    <reaction evidence="3">
        <text>cirsimaritin + S-adenosyl-L-methionine = salvigenin + S-adenosyl-L-homocysteine + H(+)</text>
        <dbReference type="Rhea" id="RHEA:73251"/>
        <dbReference type="ChEBI" id="CHEBI:15378"/>
        <dbReference type="ChEBI" id="CHEBI:57856"/>
        <dbReference type="ChEBI" id="CHEBI:59789"/>
        <dbReference type="ChEBI" id="CHEBI:81337"/>
        <dbReference type="ChEBI" id="CHEBI:192703"/>
    </reaction>
    <physiologicalReaction direction="left-to-right" evidence="7">
        <dbReference type="Rhea" id="RHEA:73252"/>
    </physiologicalReaction>
</comment>
<comment type="catalytic activity">
    <reaction evidence="3">
        <text>cirsiliol + S-adenosyl-L-methionine = eupatorin + S-adenosyl-L-homocysteine + H(+)</text>
        <dbReference type="Rhea" id="RHEA:73259"/>
        <dbReference type="ChEBI" id="CHEBI:3719"/>
        <dbReference type="ChEBI" id="CHEBI:15378"/>
        <dbReference type="ChEBI" id="CHEBI:57856"/>
        <dbReference type="ChEBI" id="CHEBI:59789"/>
        <dbReference type="ChEBI" id="CHEBI:136666"/>
    </reaction>
    <physiologicalReaction direction="left-to-right" evidence="7">
        <dbReference type="Rhea" id="RHEA:73260"/>
    </physiologicalReaction>
</comment>
<comment type="catalytic activity">
    <reaction evidence="3">
        <text>genkwanin + S-adenosyl-L-methionine = apigenin 4',7-dimethyl ether + S-adenosyl-L-homocysteine</text>
        <dbReference type="Rhea" id="RHEA:73263"/>
        <dbReference type="ChEBI" id="CHEBI:2769"/>
        <dbReference type="ChEBI" id="CHEBI:57856"/>
        <dbReference type="ChEBI" id="CHEBI:59789"/>
        <dbReference type="ChEBI" id="CHEBI:192700"/>
    </reaction>
    <physiologicalReaction direction="left-to-right" evidence="7">
        <dbReference type="Rhea" id="RHEA:73264"/>
    </physiologicalReaction>
</comment>
<comment type="activity regulation">
    <text evidence="3">Substrate inhibition by genkwanin (GENK) at concentrations above 2.5 mM.</text>
</comment>
<comment type="biophysicochemical properties">
    <kinetics>
        <KM evidence="3">410 nM for scutellarein-7-methyl ether (in the presence of S-adenosyl-L-methionine)</KM>
        <KM evidence="3">42 nM for cirsimaritin (in the presence of S-adenosyl-L-methionine)</KM>
        <KM evidence="3">130 nM for genkwanin (in the presence of S-adenosyl-L-methionine)</KM>
        <KM evidence="3">36 uM for S-adenosyl-L-methionine (in the presence of cirsimaritin)</KM>
        <text evidence="3">kcat is 85x10(-3) sec(-1) with scutellarein-7-methyl ether as substrate (in the presence of S-adenosyl-L-methionine) (PubMed:22923679). kcat is 98x10(-3) sec(-1) with cirsimaritin as substrate (in the presence of S-adenosyl-L-methionine) (PubMed:22923679). kcat is 57x10(-3) sec(-1) with genkwanin as substrate (in the presence of S-adenosyl-L-methionine) (PubMed:22923679).</text>
    </kinetics>
</comment>
<comment type="pathway">
    <text evidence="6">Flavonoid metabolism.</text>
</comment>
<comment type="subunit">
    <text evidence="1">Homodimer.</text>
</comment>
<comment type="tissue specificity">
    <text evidence="3">Expressed in leaves.</text>
</comment>
<comment type="developmental stage">
    <text evidence="3">Accumulates in young leaves but fades out during leaves aging.</text>
</comment>
<comment type="biotechnology">
    <text evidence="4">Nevadensin is a selective inhibitor of human carboxylesterase 1 (hCE-1), a key enzyme responsible for the hydrolysis of a wide range of endogenous and xenobiotic esters.</text>
</comment>
<comment type="similarity">
    <text evidence="2">Belongs to the class I-like SAM-binding methyltransferase superfamily. Cation-independent O-methyltransferase family.</text>
</comment>